<keyword id="KW-0025">Alternative splicing</keyword>
<keyword id="KW-0037">Angiogenesis</keyword>
<keyword id="KW-0175">Coiled coil</keyword>
<keyword id="KW-0963">Cytoplasm</keyword>
<keyword id="KW-0217">Developmental protein</keyword>
<keyword id="KW-0221">Differentiation</keyword>
<keyword id="KW-0343">GTPase activation</keyword>
<keyword id="KW-0539">Nucleus</keyword>
<keyword id="KW-0597">Phosphoprotein</keyword>
<keyword id="KW-1185">Reference proteome</keyword>
<keyword id="KW-0804">Transcription</keyword>
<keyword id="KW-0805">Transcription regulation</keyword>
<gene>
    <name type="primary">Arhgap22</name>
</gene>
<reference key="1">
    <citation type="journal article" date="2004" name="J. Biol. Chem.">
        <title>p68RacGAP is a novel GTPase-activating protein that interacts with vascular endothelial zinc finger-1 and modulates endothelial cell capillary formation.</title>
        <authorList>
            <person name="Aitsebaomo J."/>
            <person name="Wennerberg K."/>
            <person name="Der C.J."/>
            <person name="Zhang C."/>
            <person name="Kedar V."/>
            <person name="Moser M."/>
            <person name="Kingsley-Kallesen M.L."/>
            <person name="Zeng G.-Q."/>
            <person name="Patterson C."/>
        </authorList>
    </citation>
    <scope>NUCLEOTIDE SEQUENCE [MRNA] (ISOFORM 2)</scope>
    <scope>FUNCTION</scope>
    <scope>SUBCELLULAR LOCATION</scope>
    <scope>TISSUE SPECIFICITY</scope>
    <scope>MUTAGENESIS OF ARG-201</scope>
</reference>
<reference key="2">
    <citation type="journal article" date="2005" name="Science">
        <title>The transcriptional landscape of the mammalian genome.</title>
        <authorList>
            <person name="Carninci P."/>
            <person name="Kasukawa T."/>
            <person name="Katayama S."/>
            <person name="Gough J."/>
            <person name="Frith M.C."/>
            <person name="Maeda N."/>
            <person name="Oyama R."/>
            <person name="Ravasi T."/>
            <person name="Lenhard B."/>
            <person name="Wells C."/>
            <person name="Kodzius R."/>
            <person name="Shimokawa K."/>
            <person name="Bajic V.B."/>
            <person name="Brenner S.E."/>
            <person name="Batalov S."/>
            <person name="Forrest A.R."/>
            <person name="Zavolan M."/>
            <person name="Davis M.J."/>
            <person name="Wilming L.G."/>
            <person name="Aidinis V."/>
            <person name="Allen J.E."/>
            <person name="Ambesi-Impiombato A."/>
            <person name="Apweiler R."/>
            <person name="Aturaliya R.N."/>
            <person name="Bailey T.L."/>
            <person name="Bansal M."/>
            <person name="Baxter L."/>
            <person name="Beisel K.W."/>
            <person name="Bersano T."/>
            <person name="Bono H."/>
            <person name="Chalk A.M."/>
            <person name="Chiu K.P."/>
            <person name="Choudhary V."/>
            <person name="Christoffels A."/>
            <person name="Clutterbuck D.R."/>
            <person name="Crowe M.L."/>
            <person name="Dalla E."/>
            <person name="Dalrymple B.P."/>
            <person name="de Bono B."/>
            <person name="Della Gatta G."/>
            <person name="di Bernardo D."/>
            <person name="Down T."/>
            <person name="Engstrom P."/>
            <person name="Fagiolini M."/>
            <person name="Faulkner G."/>
            <person name="Fletcher C.F."/>
            <person name="Fukushima T."/>
            <person name="Furuno M."/>
            <person name="Futaki S."/>
            <person name="Gariboldi M."/>
            <person name="Georgii-Hemming P."/>
            <person name="Gingeras T.R."/>
            <person name="Gojobori T."/>
            <person name="Green R.E."/>
            <person name="Gustincich S."/>
            <person name="Harbers M."/>
            <person name="Hayashi Y."/>
            <person name="Hensch T.K."/>
            <person name="Hirokawa N."/>
            <person name="Hill D."/>
            <person name="Huminiecki L."/>
            <person name="Iacono M."/>
            <person name="Ikeo K."/>
            <person name="Iwama A."/>
            <person name="Ishikawa T."/>
            <person name="Jakt M."/>
            <person name="Kanapin A."/>
            <person name="Katoh M."/>
            <person name="Kawasawa Y."/>
            <person name="Kelso J."/>
            <person name="Kitamura H."/>
            <person name="Kitano H."/>
            <person name="Kollias G."/>
            <person name="Krishnan S.P."/>
            <person name="Kruger A."/>
            <person name="Kummerfeld S.K."/>
            <person name="Kurochkin I.V."/>
            <person name="Lareau L.F."/>
            <person name="Lazarevic D."/>
            <person name="Lipovich L."/>
            <person name="Liu J."/>
            <person name="Liuni S."/>
            <person name="McWilliam S."/>
            <person name="Madan Babu M."/>
            <person name="Madera M."/>
            <person name="Marchionni L."/>
            <person name="Matsuda H."/>
            <person name="Matsuzawa S."/>
            <person name="Miki H."/>
            <person name="Mignone F."/>
            <person name="Miyake S."/>
            <person name="Morris K."/>
            <person name="Mottagui-Tabar S."/>
            <person name="Mulder N."/>
            <person name="Nakano N."/>
            <person name="Nakauchi H."/>
            <person name="Ng P."/>
            <person name="Nilsson R."/>
            <person name="Nishiguchi S."/>
            <person name="Nishikawa S."/>
            <person name="Nori F."/>
            <person name="Ohara O."/>
            <person name="Okazaki Y."/>
            <person name="Orlando V."/>
            <person name="Pang K.C."/>
            <person name="Pavan W.J."/>
            <person name="Pavesi G."/>
            <person name="Pesole G."/>
            <person name="Petrovsky N."/>
            <person name="Piazza S."/>
            <person name="Reed J."/>
            <person name="Reid J.F."/>
            <person name="Ring B.Z."/>
            <person name="Ringwald M."/>
            <person name="Rost B."/>
            <person name="Ruan Y."/>
            <person name="Salzberg S.L."/>
            <person name="Sandelin A."/>
            <person name="Schneider C."/>
            <person name="Schoenbach C."/>
            <person name="Sekiguchi K."/>
            <person name="Semple C.A."/>
            <person name="Seno S."/>
            <person name="Sessa L."/>
            <person name="Sheng Y."/>
            <person name="Shibata Y."/>
            <person name="Shimada H."/>
            <person name="Shimada K."/>
            <person name="Silva D."/>
            <person name="Sinclair B."/>
            <person name="Sperling S."/>
            <person name="Stupka E."/>
            <person name="Sugiura K."/>
            <person name="Sultana R."/>
            <person name="Takenaka Y."/>
            <person name="Taki K."/>
            <person name="Tammoja K."/>
            <person name="Tan S.L."/>
            <person name="Tang S."/>
            <person name="Taylor M.S."/>
            <person name="Tegner J."/>
            <person name="Teichmann S.A."/>
            <person name="Ueda H.R."/>
            <person name="van Nimwegen E."/>
            <person name="Verardo R."/>
            <person name="Wei C.L."/>
            <person name="Yagi K."/>
            <person name="Yamanishi H."/>
            <person name="Zabarovsky E."/>
            <person name="Zhu S."/>
            <person name="Zimmer A."/>
            <person name="Hide W."/>
            <person name="Bult C."/>
            <person name="Grimmond S.M."/>
            <person name="Teasdale R.D."/>
            <person name="Liu E.T."/>
            <person name="Brusic V."/>
            <person name="Quackenbush J."/>
            <person name="Wahlestedt C."/>
            <person name="Mattick J.S."/>
            <person name="Hume D.A."/>
            <person name="Kai C."/>
            <person name="Sasaki D."/>
            <person name="Tomaru Y."/>
            <person name="Fukuda S."/>
            <person name="Kanamori-Katayama M."/>
            <person name="Suzuki M."/>
            <person name="Aoki J."/>
            <person name="Arakawa T."/>
            <person name="Iida J."/>
            <person name="Imamura K."/>
            <person name="Itoh M."/>
            <person name="Kato T."/>
            <person name="Kawaji H."/>
            <person name="Kawagashira N."/>
            <person name="Kawashima T."/>
            <person name="Kojima M."/>
            <person name="Kondo S."/>
            <person name="Konno H."/>
            <person name="Nakano K."/>
            <person name="Ninomiya N."/>
            <person name="Nishio T."/>
            <person name="Okada M."/>
            <person name="Plessy C."/>
            <person name="Shibata K."/>
            <person name="Shiraki T."/>
            <person name="Suzuki S."/>
            <person name="Tagami M."/>
            <person name="Waki K."/>
            <person name="Watahiki A."/>
            <person name="Okamura-Oho Y."/>
            <person name="Suzuki H."/>
            <person name="Kawai J."/>
            <person name="Hayashizaki Y."/>
        </authorList>
    </citation>
    <scope>NUCLEOTIDE SEQUENCE [LARGE SCALE MRNA] (ISOFORM 1)</scope>
    <source>
        <strain>C57BL/6J</strain>
        <tissue>Corpora quadrigemina</tissue>
        <tissue>Olfactory bulb</tissue>
    </source>
</reference>
<reference key="3">
    <citation type="journal article" date="2004" name="Genome Res.">
        <title>The status, quality, and expansion of the NIH full-length cDNA project: the Mammalian Gene Collection (MGC).</title>
        <authorList>
            <consortium name="The MGC Project Team"/>
        </authorList>
    </citation>
    <scope>NUCLEOTIDE SEQUENCE [LARGE SCALE MRNA] (ISOFORM 3)</scope>
    <source>
        <strain>FVB/N</strain>
        <tissue>Kidney</tissue>
    </source>
</reference>
<reference key="4">
    <citation type="journal article" date="2010" name="Cell">
        <title>A tissue-specific atlas of mouse protein phosphorylation and expression.</title>
        <authorList>
            <person name="Huttlin E.L."/>
            <person name="Jedrychowski M.P."/>
            <person name="Elias J.E."/>
            <person name="Goswami T."/>
            <person name="Rad R."/>
            <person name="Beausoleil S.A."/>
            <person name="Villen J."/>
            <person name="Haas W."/>
            <person name="Sowa M.E."/>
            <person name="Gygi S.P."/>
        </authorList>
    </citation>
    <scope>IDENTIFICATION BY MASS SPECTROMETRY [LARGE SCALE ANALYSIS]</scope>
    <source>
        <tissue>Kidney</tissue>
        <tissue>Lung</tissue>
    </source>
</reference>
<proteinExistence type="evidence at protein level"/>
<protein>
    <recommendedName>
        <fullName>Rho GTPase-activating protein 22</fullName>
    </recommendedName>
    <alternativeName>
        <fullName>Rho-type GTPase-activating protein 22</fullName>
    </alternativeName>
    <alternativeName>
        <fullName>p68RacGAP</fullName>
    </alternativeName>
</protein>
<comment type="function">
    <text evidence="6">Rho GTPase-activating protein involved in the signal transduction pathway that regulates endothelial cell capillary tube formation during angiogenesis. Acts as a GTPase activator for the RAC1 by converting it to an inactive GDP-bound state. Inhibits RAC1-dependent lamellipodia formation. May also play a role in transcription regulation via its interaction with VEZF1, by regulating activity of the endothelin-1 (EDN1) promoter.</text>
</comment>
<comment type="subunit">
    <text>Interacts with VEZF1.</text>
</comment>
<comment type="subcellular location">
    <subcellularLocation>
        <location evidence="6">Cytoplasm</location>
    </subcellularLocation>
    <subcellularLocation>
        <location evidence="6">Nucleus</location>
    </subcellularLocation>
    <text>Mainly cytoplasmic. Some fraction is nuclear.</text>
</comment>
<comment type="alternative products">
    <event type="alternative splicing"/>
    <isoform>
        <id>Q8BL80-1</id>
        <name>1</name>
        <sequence type="displayed"/>
    </isoform>
    <isoform>
        <id>Q8BL80-2</id>
        <name>2</name>
        <sequence type="described" ref="VSP_023706"/>
    </isoform>
    <isoform>
        <id>Q8BL80-3</id>
        <name>3</name>
        <sequence type="described" ref="VSP_023706 VSP_023707"/>
    </isoform>
</comment>
<comment type="tissue specificity">
    <text evidence="6">Predominantly present in endothelial cells (at protein level).</text>
</comment>
<comment type="sequence caution" evidence="9">
    <conflict type="frameshift">
        <sequence resource="EMBL-CDS" id="BAC32603"/>
    </conflict>
</comment>
<comment type="sequence caution" evidence="9">
    <conflict type="frameshift">
        <sequence resource="EMBL-CDS" id="BAC37178"/>
    </conflict>
</comment>
<name>RHG22_MOUSE</name>
<feature type="chain" id="PRO_0000280470" description="Rho GTPase-activating protein 22">
    <location>
        <begin position="1"/>
        <end position="702"/>
    </location>
</feature>
<feature type="domain" description="PH" evidence="3">
    <location>
        <begin position="43"/>
        <end position="151"/>
    </location>
</feature>
<feature type="domain" description="Rho-GAP" evidence="4">
    <location>
        <begin position="161"/>
        <end position="355"/>
    </location>
</feature>
<feature type="region of interest" description="Disordered" evidence="5">
    <location>
        <begin position="360"/>
        <end position="433"/>
    </location>
</feature>
<feature type="region of interest" description="Disordered" evidence="5">
    <location>
        <begin position="438"/>
        <end position="457"/>
    </location>
</feature>
<feature type="region of interest" description="Disordered" evidence="5">
    <location>
        <begin position="480"/>
        <end position="511"/>
    </location>
</feature>
<feature type="region of interest" description="Disordered" evidence="5">
    <location>
        <begin position="555"/>
        <end position="596"/>
    </location>
</feature>
<feature type="coiled-coil region" evidence="2">
    <location>
        <begin position="594"/>
        <end position="691"/>
    </location>
</feature>
<feature type="compositionally biased region" description="Polar residues" evidence="5">
    <location>
        <begin position="407"/>
        <end position="421"/>
    </location>
</feature>
<feature type="compositionally biased region" description="Polar residues" evidence="5">
    <location>
        <begin position="438"/>
        <end position="456"/>
    </location>
</feature>
<feature type="compositionally biased region" description="Polar residues" evidence="5">
    <location>
        <begin position="491"/>
        <end position="504"/>
    </location>
</feature>
<feature type="compositionally biased region" description="Polar residues" evidence="5">
    <location>
        <begin position="581"/>
        <end position="594"/>
    </location>
</feature>
<feature type="site" description="Arginine finger; crucial for GTP hydrolysis by stabilizing the transition state" evidence="4">
    <location>
        <position position="201"/>
    </location>
</feature>
<feature type="modified residue" description="Phosphoserine" evidence="1">
    <location>
        <position position="365"/>
    </location>
</feature>
<feature type="modified residue" description="Phosphoserine" evidence="1">
    <location>
        <position position="397"/>
    </location>
</feature>
<feature type="splice variant" id="VSP_023706" description="In isoform 2 and isoform 3." evidence="7 8">
    <location>
        <begin position="1"/>
        <end position="131"/>
    </location>
</feature>
<feature type="splice variant" id="VSP_023707" description="In isoform 3." evidence="8">
    <original>STTDVHTVASLLKLYLRELPEPVIPFARYEDFLSCAQLLTKDEGEGTVELAKQVSNLPQANYNLLRYICK</original>
    <variation>R</variation>
    <location>
        <begin position="226"/>
        <end position="295"/>
    </location>
</feature>
<feature type="mutagenesis site" description="Loss of function." evidence="6">
    <original>R</original>
    <variation>A</variation>
    <location>
        <position position="201"/>
    </location>
</feature>
<feature type="sequence conflict" description="In Ref. 2; BAC32603/BAC37178." evidence="9" ref="2">
    <original>L</original>
    <variation>R</variation>
    <location>
        <position position="487"/>
    </location>
</feature>
<organism>
    <name type="scientific">Mus musculus</name>
    <name type="common">Mouse</name>
    <dbReference type="NCBI Taxonomy" id="10090"/>
    <lineage>
        <taxon>Eukaryota</taxon>
        <taxon>Metazoa</taxon>
        <taxon>Chordata</taxon>
        <taxon>Craniata</taxon>
        <taxon>Vertebrata</taxon>
        <taxon>Euteleostomi</taxon>
        <taxon>Mammalia</taxon>
        <taxon>Eutheria</taxon>
        <taxon>Euarchontoglires</taxon>
        <taxon>Glires</taxon>
        <taxon>Rodentia</taxon>
        <taxon>Myomorpha</taxon>
        <taxon>Muroidea</taxon>
        <taxon>Muridae</taxon>
        <taxon>Murinae</taxon>
        <taxon>Mus</taxon>
        <taxon>Mus</taxon>
    </lineage>
</organism>
<evidence type="ECO:0000250" key="1">
    <source>
        <dbReference type="UniProtKB" id="Q7Z5H3"/>
    </source>
</evidence>
<evidence type="ECO:0000255" key="2"/>
<evidence type="ECO:0000255" key="3">
    <source>
        <dbReference type="PROSITE-ProRule" id="PRU00145"/>
    </source>
</evidence>
<evidence type="ECO:0000255" key="4">
    <source>
        <dbReference type="PROSITE-ProRule" id="PRU00172"/>
    </source>
</evidence>
<evidence type="ECO:0000256" key="5">
    <source>
        <dbReference type="SAM" id="MobiDB-lite"/>
    </source>
</evidence>
<evidence type="ECO:0000269" key="6">
    <source>
    </source>
</evidence>
<evidence type="ECO:0000303" key="7">
    <source>
    </source>
</evidence>
<evidence type="ECO:0000303" key="8">
    <source>
    </source>
</evidence>
<evidence type="ECO:0000305" key="9"/>
<dbReference type="EMBL" id="AY541447">
    <property type="protein sequence ID" value="AAS47033.1"/>
    <property type="molecule type" value="mRNA"/>
</dbReference>
<dbReference type="EMBL" id="AK046097">
    <property type="protein sequence ID" value="BAC32603.1"/>
    <property type="status" value="ALT_FRAME"/>
    <property type="molecule type" value="mRNA"/>
</dbReference>
<dbReference type="EMBL" id="AK078218">
    <property type="protein sequence ID" value="BAC37178.1"/>
    <property type="status" value="ALT_FRAME"/>
    <property type="molecule type" value="mRNA"/>
</dbReference>
<dbReference type="EMBL" id="BC038272">
    <property type="protein sequence ID" value="AAH38272.1"/>
    <property type="molecule type" value="mRNA"/>
</dbReference>
<dbReference type="CCDS" id="CCDS26926.2">
    <molecule id="Q8BL80-1"/>
</dbReference>
<dbReference type="RefSeq" id="NP_722495.3">
    <molecule id="Q8BL80-1"/>
    <property type="nucleotide sequence ID" value="NM_153800.4"/>
</dbReference>
<dbReference type="RefSeq" id="XP_011243355.1">
    <molecule id="Q8BL80-1"/>
    <property type="nucleotide sequence ID" value="XM_011245053.4"/>
</dbReference>
<dbReference type="SMR" id="Q8BL80"/>
<dbReference type="BioGRID" id="232034">
    <property type="interactions" value="6"/>
</dbReference>
<dbReference type="CORUM" id="Q8BL80"/>
<dbReference type="FunCoup" id="Q8BL80">
    <property type="interactions" value="99"/>
</dbReference>
<dbReference type="IntAct" id="Q8BL80">
    <property type="interactions" value="1"/>
</dbReference>
<dbReference type="STRING" id="10090.ENSMUSP00000107587"/>
<dbReference type="iPTMnet" id="Q8BL80"/>
<dbReference type="PhosphoSitePlus" id="Q8BL80"/>
<dbReference type="REPRODUCTION-2DPAGE" id="Q8BL80"/>
<dbReference type="jPOST" id="Q8BL80"/>
<dbReference type="PaxDb" id="10090-ENSMUSP00000107587"/>
<dbReference type="PeptideAtlas" id="Q8BL80"/>
<dbReference type="ProteomicsDB" id="255329">
    <molecule id="Q8BL80-1"/>
</dbReference>
<dbReference type="ProteomicsDB" id="255330">
    <molecule id="Q8BL80-2"/>
</dbReference>
<dbReference type="ProteomicsDB" id="255331">
    <molecule id="Q8BL80-3"/>
</dbReference>
<dbReference type="Pumba" id="Q8BL80"/>
<dbReference type="Antibodypedia" id="58456">
    <property type="antibodies" value="151 antibodies from 26 providers"/>
</dbReference>
<dbReference type="DNASU" id="239027"/>
<dbReference type="Ensembl" id="ENSMUST00000111956.9">
    <molecule id="Q8BL80-1"/>
    <property type="protein sequence ID" value="ENSMUSP00000107587.3"/>
    <property type="gene ID" value="ENSMUSG00000063506.15"/>
</dbReference>
<dbReference type="GeneID" id="239027"/>
<dbReference type="KEGG" id="mmu:239027"/>
<dbReference type="UCSC" id="uc007szm.2">
    <molecule id="Q8BL80-1"/>
    <property type="organism name" value="mouse"/>
</dbReference>
<dbReference type="AGR" id="MGI:2443418"/>
<dbReference type="CTD" id="58504"/>
<dbReference type="MGI" id="MGI:2443418">
    <property type="gene designation" value="Arhgap22"/>
</dbReference>
<dbReference type="VEuPathDB" id="HostDB:ENSMUSG00000063506"/>
<dbReference type="eggNOG" id="KOG4270">
    <property type="taxonomic scope" value="Eukaryota"/>
</dbReference>
<dbReference type="GeneTree" id="ENSGT00950000183015"/>
<dbReference type="HOGENOM" id="CLU_020795_0_0_1"/>
<dbReference type="InParanoid" id="Q8BL80"/>
<dbReference type="OMA" id="WKYSFKQ"/>
<dbReference type="OrthoDB" id="185175at2759"/>
<dbReference type="PhylomeDB" id="Q8BL80"/>
<dbReference type="TreeFam" id="TF323577"/>
<dbReference type="Reactome" id="R-MMU-8980692">
    <property type="pathway name" value="RHOA GTPase cycle"/>
</dbReference>
<dbReference type="Reactome" id="R-MMU-9013148">
    <property type="pathway name" value="CDC42 GTPase cycle"/>
</dbReference>
<dbReference type="Reactome" id="R-MMU-9013149">
    <property type="pathway name" value="RAC1 GTPase cycle"/>
</dbReference>
<dbReference type="BioGRID-ORCS" id="239027">
    <property type="hits" value="3 hits in 78 CRISPR screens"/>
</dbReference>
<dbReference type="ChiTaRS" id="Arhgap22">
    <property type="organism name" value="mouse"/>
</dbReference>
<dbReference type="PRO" id="PR:Q8BL80"/>
<dbReference type="Proteomes" id="UP000000589">
    <property type="component" value="Chromosome 14"/>
</dbReference>
<dbReference type="RNAct" id="Q8BL80">
    <property type="molecule type" value="protein"/>
</dbReference>
<dbReference type="Bgee" id="ENSMUSG00000063506">
    <property type="expression patterns" value="Expressed in ectoplacental cone and 97 other cell types or tissues"/>
</dbReference>
<dbReference type="ExpressionAtlas" id="Q8BL80">
    <property type="expression patterns" value="baseline and differential"/>
</dbReference>
<dbReference type="GO" id="GO:0005737">
    <property type="term" value="C:cytoplasm"/>
    <property type="evidence" value="ECO:0007669"/>
    <property type="project" value="UniProtKB-SubCell"/>
</dbReference>
<dbReference type="GO" id="GO:0098978">
    <property type="term" value="C:glutamatergic synapse"/>
    <property type="evidence" value="ECO:0007669"/>
    <property type="project" value="Ensembl"/>
</dbReference>
<dbReference type="GO" id="GO:0005634">
    <property type="term" value="C:nucleus"/>
    <property type="evidence" value="ECO:0007669"/>
    <property type="project" value="UniProtKB-SubCell"/>
</dbReference>
<dbReference type="GO" id="GO:0005096">
    <property type="term" value="F:GTPase activator activity"/>
    <property type="evidence" value="ECO:0007669"/>
    <property type="project" value="UniProtKB-KW"/>
</dbReference>
<dbReference type="GO" id="GO:0001525">
    <property type="term" value="P:angiogenesis"/>
    <property type="evidence" value="ECO:0007669"/>
    <property type="project" value="UniProtKB-KW"/>
</dbReference>
<dbReference type="GO" id="GO:0030154">
    <property type="term" value="P:cell differentiation"/>
    <property type="evidence" value="ECO:0007669"/>
    <property type="project" value="UniProtKB-KW"/>
</dbReference>
<dbReference type="GO" id="GO:0099175">
    <property type="term" value="P:regulation of postsynapse organization"/>
    <property type="evidence" value="ECO:0007669"/>
    <property type="project" value="Ensembl"/>
</dbReference>
<dbReference type="GO" id="GO:0051056">
    <property type="term" value="P:regulation of small GTPase mediated signal transduction"/>
    <property type="evidence" value="ECO:0007669"/>
    <property type="project" value="UniProtKB-ARBA"/>
</dbReference>
<dbReference type="GO" id="GO:0007165">
    <property type="term" value="P:signal transduction"/>
    <property type="evidence" value="ECO:0007669"/>
    <property type="project" value="InterPro"/>
</dbReference>
<dbReference type="CDD" id="cd04390">
    <property type="entry name" value="RhoGAP_ARHGAP22_24_25"/>
    <property type="match status" value="1"/>
</dbReference>
<dbReference type="FunFam" id="2.30.29.30:FF:000120">
    <property type="entry name" value="rho GTPase-activating protein 22 isoform X1"/>
    <property type="match status" value="1"/>
</dbReference>
<dbReference type="FunFam" id="1.10.555.10:FF:000015">
    <property type="entry name" value="rho GTPase-activating protein 25 isoform X1"/>
    <property type="match status" value="1"/>
</dbReference>
<dbReference type="Gene3D" id="2.30.29.30">
    <property type="entry name" value="Pleckstrin-homology domain (PH domain)/Phosphotyrosine-binding domain (PTB)"/>
    <property type="match status" value="1"/>
</dbReference>
<dbReference type="Gene3D" id="1.10.555.10">
    <property type="entry name" value="Rho GTPase activation protein"/>
    <property type="match status" value="1"/>
</dbReference>
<dbReference type="InterPro" id="IPR011993">
    <property type="entry name" value="PH-like_dom_sf"/>
</dbReference>
<dbReference type="InterPro" id="IPR001849">
    <property type="entry name" value="PH_domain"/>
</dbReference>
<dbReference type="InterPro" id="IPR008936">
    <property type="entry name" value="Rho_GTPase_activation_prot"/>
</dbReference>
<dbReference type="InterPro" id="IPR051025">
    <property type="entry name" value="RhoGAP"/>
</dbReference>
<dbReference type="InterPro" id="IPR000198">
    <property type="entry name" value="RhoGAP_dom"/>
</dbReference>
<dbReference type="PANTHER" id="PTHR15228:SF22">
    <property type="entry name" value="RHO GTPASE-ACTIVATING PROTEIN 22"/>
    <property type="match status" value="1"/>
</dbReference>
<dbReference type="PANTHER" id="PTHR15228">
    <property type="entry name" value="SPERMATHECAL PHYSIOLOGY VARIANT"/>
    <property type="match status" value="1"/>
</dbReference>
<dbReference type="Pfam" id="PF00169">
    <property type="entry name" value="PH"/>
    <property type="match status" value="1"/>
</dbReference>
<dbReference type="Pfam" id="PF00620">
    <property type="entry name" value="RhoGAP"/>
    <property type="match status" value="1"/>
</dbReference>
<dbReference type="SMART" id="SM00233">
    <property type="entry name" value="PH"/>
    <property type="match status" value="1"/>
</dbReference>
<dbReference type="SMART" id="SM00324">
    <property type="entry name" value="RhoGAP"/>
    <property type="match status" value="1"/>
</dbReference>
<dbReference type="SUPFAM" id="SSF48350">
    <property type="entry name" value="GTPase activation domain, GAP"/>
    <property type="match status" value="1"/>
</dbReference>
<dbReference type="SUPFAM" id="SSF50729">
    <property type="entry name" value="PH domain-like"/>
    <property type="match status" value="1"/>
</dbReference>
<dbReference type="PROSITE" id="PS50003">
    <property type="entry name" value="PH_DOMAIN"/>
    <property type="match status" value="1"/>
</dbReference>
<dbReference type="PROSITE" id="PS50238">
    <property type="entry name" value="RHOGAP"/>
    <property type="match status" value="1"/>
</dbReference>
<accession>Q8BL80</accession>
<accession>Q6QHH6</accession>
<accession>Q8BVH4</accession>
<accession>Q8CHY5</accession>
<sequence>MLPTASSKRRTFAARYFTRSKSLVMGEQSRSPGRPLVPHKLGPVLKAGWLRKQRSIMKNWQQRWFVLRGDQLFYYKDKDESKPQGFISLQGTQVTELLPDPEDPGKHLFEITPGGATEREKVPANPEALLLMASSQRDMEDWVQAIRRVIWAPLGRGIFGQRLEDTVHHERKFGPRLAPLLVEQCVDFIRERGLSEEGLFRMPGQANLVRDLQDSFDCGEKPLFDSTTDVHTVASLLKLYLRELPEPVIPFARYEDFLSCAQLLTKDEGEGTVELAKQVSNLPQANYNLLRYICKFLDEVQAHSDVNKMSVQNLATVFGPNILRPQIEDPVTIMEGTSLVQHLMTVLIRKHGQLFAATSLEEPASPHGTVEWGSEEVTRDHRGEPGSPGLPTHRTSSLDGPAAAVLSRTSPPRLGSQTGPAATSPGKKMHTLPVWKSSFRQQGSRSESPKGVNSSLEVPIISSGGNWLINGLSSLRSHRRASSGDRLKDTGSAQRLSTYDNVPPSSQFSSTASVASTSWSVASSSREASVSSCTACRASNSSACSSLHTEWALEPSPLPSSSEGHQSPDLGHSLDEPCVGSGSSEPNDPGSPTQAHVRRCRALQGQVAELRAELCQQRTEYKRSLKSIEEGSADLRKQMSRLEEELDQERKKYAMLEIKLRNSERAREDAERRNQLLQREMEEFFSTLGSLTTGTKGSRAPE</sequence>